<name>MOMPH_CHLTH</name>
<protein>
    <recommendedName>
        <fullName>Major outer membrane porin, serovar H</fullName>
        <shortName>MOMP</shortName>
    </recommendedName>
</protein>
<keyword id="KW-0998">Cell outer membrane</keyword>
<keyword id="KW-0133">Cell shape</keyword>
<keyword id="KW-1015">Disulfide bond</keyword>
<keyword id="KW-0406">Ion transport</keyword>
<keyword id="KW-0472">Membrane</keyword>
<keyword id="KW-0626">Porin</keyword>
<keyword id="KW-0732">Signal</keyword>
<keyword id="KW-0812">Transmembrane</keyword>
<keyword id="KW-1134">Transmembrane beta strand</keyword>
<keyword id="KW-0813">Transport</keyword>
<gene>
    <name type="primary">ompA</name>
    <name type="synonym">omp1H</name>
</gene>
<sequence length="397" mass="42947">MKKLLKSVLVFAALSSASSLQALPVGNPAEPSLMIDGILWEGFGGDPCDPCATWCDAISMRVGYYGDFVFDRVLKTDVNKEFQMGAAPTTNDAADLQNDPKTNVARPNPAYGKHMQDAEMFTNAAYMALNIWDRFDVFCTLGATTGYLKGNSASFNLVGLFGTKTKSSDFNTAKLVPNIALNRAVVELYTDTTFAWSVGARAALWECGCATLGASFQYAQSKPKVEELNVLCNASEFTINKPKGYVGAEFPLDITAGTEAATGTKDASIDYHEWQASLALSYRLNMFTPYIGVKWSRVSFDADTIRIAQPKLAEAILDVTTLNPTIAGKGTVVASGSDNDLADTMQIVSLQLNKMKSRKSCGIAVGTTIVDADKYAVTVETRLIDERAAHVNAQFRF</sequence>
<comment type="function">
    <text evidence="1">In elementary bodies (EBs, the infectious stage, which is able to survive outside the host cell) provides the structural integrity of the outer envelope through disulfide cross-links with the small cysteine-rich protein and the large cysteine-rich periplasmic protein. It has been described in publications as the Sarkosyl-insoluble COMC (Chlamydia outer membrane complex), and serves as the functional equivalent of peptidoglycan (By similarity).</text>
</comment>
<comment type="function">
    <text evidence="1">Permits diffusion of specific solutes through the outer membrane.</text>
</comment>
<comment type="subunit">
    <text>Part of a disulfide cross-linked outer membrane complex (COMC) composed of the major outer membrane porin (MOMP), the small cysteine-rich protein (OmcA) and the large cysteine-rich periplasmic protein (OmcB).</text>
</comment>
<comment type="subcellular location">
    <subcellularLocation>
        <location evidence="1">Cell outer membrane</location>
        <topology evidence="1">Multi-pass membrane protein</topology>
    </subcellularLocation>
</comment>
<comment type="developmental stage">
    <text>It is present but some of the disulfide bonds are reduced in reticulate bodies (RBs).</text>
</comment>
<comment type="similarity">
    <text evidence="2">Belongs to the chlamydial porin (CP) (TC 1.B.2) family.</text>
</comment>
<organism>
    <name type="scientific">Chlamydia trachomatis</name>
    <dbReference type="NCBI Taxonomy" id="813"/>
    <lineage>
        <taxon>Bacteria</taxon>
        <taxon>Pseudomonadati</taxon>
        <taxon>Chlamydiota</taxon>
        <taxon>Chlamydiia</taxon>
        <taxon>Chlamydiales</taxon>
        <taxon>Chlamydiaceae</taxon>
        <taxon>Chlamydia/Chlamydophila group</taxon>
        <taxon>Chlamydia</taxon>
    </lineage>
</organism>
<feature type="signal peptide">
    <location>
        <begin position="1"/>
        <end position="22"/>
    </location>
</feature>
<feature type="chain" id="PRO_0000020150" description="Major outer membrane porin, serovar H">
    <location>
        <begin position="23"/>
        <end position="397"/>
    </location>
</feature>
<dbReference type="EMBL" id="X16007">
    <property type="protein sequence ID" value="CAA34145.1"/>
    <property type="molecule type" value="Genomic_DNA"/>
</dbReference>
<dbReference type="EMBL" id="AF304857">
    <property type="protein sequence ID" value="AAG41415.1"/>
    <property type="molecule type" value="Genomic_DNA"/>
</dbReference>
<dbReference type="PIR" id="S06589">
    <property type="entry name" value="MMCWTH"/>
</dbReference>
<dbReference type="RefSeq" id="WP_100139615.1">
    <property type="nucleotide sequence ID" value="NZ_CP017732.1"/>
</dbReference>
<dbReference type="GO" id="GO:0009279">
    <property type="term" value="C:cell outer membrane"/>
    <property type="evidence" value="ECO:0007669"/>
    <property type="project" value="UniProtKB-SubCell"/>
</dbReference>
<dbReference type="GO" id="GO:0046930">
    <property type="term" value="C:pore complex"/>
    <property type="evidence" value="ECO:0007669"/>
    <property type="project" value="UniProtKB-KW"/>
</dbReference>
<dbReference type="GO" id="GO:0015288">
    <property type="term" value="F:porin activity"/>
    <property type="evidence" value="ECO:0007669"/>
    <property type="project" value="UniProtKB-KW"/>
</dbReference>
<dbReference type="GO" id="GO:0005198">
    <property type="term" value="F:structural molecule activity"/>
    <property type="evidence" value="ECO:0007669"/>
    <property type="project" value="InterPro"/>
</dbReference>
<dbReference type="GO" id="GO:0006811">
    <property type="term" value="P:monoatomic ion transport"/>
    <property type="evidence" value="ECO:0007669"/>
    <property type="project" value="UniProtKB-KW"/>
</dbReference>
<dbReference type="GO" id="GO:0008360">
    <property type="term" value="P:regulation of cell shape"/>
    <property type="evidence" value="ECO:0007669"/>
    <property type="project" value="UniProtKB-KW"/>
</dbReference>
<dbReference type="InterPro" id="IPR000604">
    <property type="entry name" value="Major_OMP_Chlamydia"/>
</dbReference>
<dbReference type="Pfam" id="PF01308">
    <property type="entry name" value="Chlam_OMP"/>
    <property type="match status" value="1"/>
</dbReference>
<dbReference type="PRINTS" id="PR01334">
    <property type="entry name" value="CHLAMIDIAOMP"/>
</dbReference>
<proteinExistence type="evidence at transcript level"/>
<reference key="1">
    <citation type="journal article" date="1989" name="Nucleic Acids Res.">
        <title>Nucleotide sequence of the major outer membrane protein gene from Chlamydia trachomatis serovar H.</title>
        <authorList>
            <person name="Hamilton P.T."/>
            <person name="Malinowski D.P."/>
        </authorList>
    </citation>
    <scope>NUCLEOTIDE SEQUENCE [GENOMIC DNA]</scope>
    <source>
        <strain>Serovar H</strain>
    </source>
</reference>
<reference key="2">
    <citation type="submission" date="2000-09" db="EMBL/GenBank/DDBJ databases">
        <title>Sequence analysis of the major outer membrane protein gene (ompA) of Chlamydia trachomatis.</title>
        <authorList>
            <person name="Dean D.A."/>
        </authorList>
    </citation>
    <scope>NUCLEOTIDE SEQUENCE [GENOMIC DNA]</scope>
    <source>
        <strain>H/UW-4</strain>
    </source>
</reference>
<accession>P13467</accession>
<evidence type="ECO:0000250" key="1"/>
<evidence type="ECO:0000305" key="2"/>